<sequence length="522" mass="61145">MSDAAAPEEQDELSGGSVQELLPGLQRDLEAEVIRGFIANIAIYPVLLLYFFGTFAYVTRNVVPYEFIDEQFHIGQTITYLKGHWFTWDPKITTPPGLYILGWLNYKVLKPLLKSWSTLTILRLVNAFGGLVYFPLVVLRPIFLFNAISFWPVALMSFPLMATYYYLYYTDVWSTIFIIQSLSIGLTMPFGLSKSIWLSALFAGISCLFRQTNIVWCGFIMLIVVERQAIIAKQFNTHGLNNYLKLFIHSVEEFQTLVLPYALNFVGFFLYLIWNRSITLGDKSNHNAGIHLVQVFYCFAFLTVFSVPLWFSKNFLRMYLERTNRKQVQVFFEIFLIMMVIRYFTKVHPFLLADNRHYTFYLFKRLINHNRRIIKYGLMAPIYHFCTFVYLEILRPSELLFDPISPLPIKDPNLLPVQLTHISWTALILCTFATVVPSPLFEPRYYILPYFFWRLFITCSAEPIWGEIVPGKSNEEPVTISSTSRLFLEFVWFILIDIVTLIIFVRYSFPWASEAFMQRIIW</sequence>
<gene>
    <name type="primary">ALG10</name>
    <name type="ordered locus">CAGL0L06556g</name>
</gene>
<accession>Q6FL34</accession>
<keyword id="KW-0256">Endoplasmic reticulum</keyword>
<keyword id="KW-0325">Glycoprotein</keyword>
<keyword id="KW-0328">Glycosyltransferase</keyword>
<keyword id="KW-0472">Membrane</keyword>
<keyword id="KW-1185">Reference proteome</keyword>
<keyword id="KW-0808">Transferase</keyword>
<keyword id="KW-0812">Transmembrane</keyword>
<keyword id="KW-1133">Transmembrane helix</keyword>
<dbReference type="EC" id="2.4.1.256" evidence="1"/>
<dbReference type="EMBL" id="CR380958">
    <property type="protein sequence ID" value="CAG62030.1"/>
    <property type="molecule type" value="Genomic_DNA"/>
</dbReference>
<dbReference type="RefSeq" id="XP_449060.1">
    <property type="nucleotide sequence ID" value="XM_449060.1"/>
</dbReference>
<dbReference type="FunCoup" id="Q6FL34">
    <property type="interactions" value="714"/>
</dbReference>
<dbReference type="STRING" id="284593.Q6FL34"/>
<dbReference type="CAZy" id="GT59">
    <property type="family name" value="Glycosyltransferase Family 59"/>
</dbReference>
<dbReference type="GlyCosmos" id="Q6FL34">
    <property type="glycosylation" value="1 site, No reported glycans"/>
</dbReference>
<dbReference type="EnsemblFungi" id="CAGL0L06556g-T">
    <property type="protein sequence ID" value="CAGL0L06556g-T-p1"/>
    <property type="gene ID" value="CAGL0L06556g"/>
</dbReference>
<dbReference type="KEGG" id="cgr:2890660"/>
<dbReference type="CGD" id="CAL0135746">
    <property type="gene designation" value="CAGL0L06556g"/>
</dbReference>
<dbReference type="VEuPathDB" id="FungiDB:B1J91_L06556g"/>
<dbReference type="VEuPathDB" id="FungiDB:CAGL0L06556g"/>
<dbReference type="eggNOG" id="KOG2642">
    <property type="taxonomic scope" value="Eukaryota"/>
</dbReference>
<dbReference type="HOGENOM" id="CLU_017053_1_0_1"/>
<dbReference type="InParanoid" id="Q6FL34"/>
<dbReference type="OMA" id="VWDSKIT"/>
<dbReference type="UniPathway" id="UPA00378"/>
<dbReference type="Proteomes" id="UP000002428">
    <property type="component" value="Chromosome L"/>
</dbReference>
<dbReference type="GO" id="GO:0005789">
    <property type="term" value="C:endoplasmic reticulum membrane"/>
    <property type="evidence" value="ECO:0007669"/>
    <property type="project" value="UniProtKB-SubCell"/>
</dbReference>
<dbReference type="GO" id="GO:0106073">
    <property type="term" value="F:dolichyl pyrophosphate Glc2Man9GlcNAc2 alpha-1,2-glucosyltransferase activity"/>
    <property type="evidence" value="ECO:0007669"/>
    <property type="project" value="UniProtKB-EC"/>
</dbReference>
<dbReference type="GO" id="GO:0006488">
    <property type="term" value="P:dolichol-linked oligosaccharide biosynthetic process"/>
    <property type="evidence" value="ECO:0007669"/>
    <property type="project" value="EnsemblFungi"/>
</dbReference>
<dbReference type="InterPro" id="IPR016900">
    <property type="entry name" value="Alg10"/>
</dbReference>
<dbReference type="PANTHER" id="PTHR12989">
    <property type="entry name" value="ALPHA-1,2-GLUCOSYLTRANSFERASE ALG10"/>
    <property type="match status" value="1"/>
</dbReference>
<dbReference type="PANTHER" id="PTHR12989:SF10">
    <property type="entry name" value="DOL-P-GLC:GLC(2)MAN(9)GLCNAC(2)-PP-DOL ALPHA-1,2-GLUCOSYLTRANSFERASE-RELATED"/>
    <property type="match status" value="1"/>
</dbReference>
<dbReference type="Pfam" id="PF04922">
    <property type="entry name" value="DIE2_ALG10"/>
    <property type="match status" value="1"/>
</dbReference>
<dbReference type="PIRSF" id="PIRSF028810">
    <property type="entry name" value="Alpha1_2_glucosyltferase_Alg10"/>
    <property type="match status" value="1"/>
</dbReference>
<proteinExistence type="inferred from homology"/>
<name>ALG10_CANGA</name>
<evidence type="ECO:0000250" key="1">
    <source>
        <dbReference type="UniProtKB" id="P50076"/>
    </source>
</evidence>
<evidence type="ECO:0000255" key="2"/>
<evidence type="ECO:0000305" key="3"/>
<reference key="1">
    <citation type="journal article" date="2004" name="Nature">
        <title>Genome evolution in yeasts.</title>
        <authorList>
            <person name="Dujon B."/>
            <person name="Sherman D."/>
            <person name="Fischer G."/>
            <person name="Durrens P."/>
            <person name="Casaregola S."/>
            <person name="Lafontaine I."/>
            <person name="de Montigny J."/>
            <person name="Marck C."/>
            <person name="Neuveglise C."/>
            <person name="Talla E."/>
            <person name="Goffard N."/>
            <person name="Frangeul L."/>
            <person name="Aigle M."/>
            <person name="Anthouard V."/>
            <person name="Babour A."/>
            <person name="Barbe V."/>
            <person name="Barnay S."/>
            <person name="Blanchin S."/>
            <person name="Beckerich J.-M."/>
            <person name="Beyne E."/>
            <person name="Bleykasten C."/>
            <person name="Boisrame A."/>
            <person name="Boyer J."/>
            <person name="Cattolico L."/>
            <person name="Confanioleri F."/>
            <person name="de Daruvar A."/>
            <person name="Despons L."/>
            <person name="Fabre E."/>
            <person name="Fairhead C."/>
            <person name="Ferry-Dumazet H."/>
            <person name="Groppi A."/>
            <person name="Hantraye F."/>
            <person name="Hennequin C."/>
            <person name="Jauniaux N."/>
            <person name="Joyet P."/>
            <person name="Kachouri R."/>
            <person name="Kerrest A."/>
            <person name="Koszul R."/>
            <person name="Lemaire M."/>
            <person name="Lesur I."/>
            <person name="Ma L."/>
            <person name="Muller H."/>
            <person name="Nicaud J.-M."/>
            <person name="Nikolski M."/>
            <person name="Oztas S."/>
            <person name="Ozier-Kalogeropoulos O."/>
            <person name="Pellenz S."/>
            <person name="Potier S."/>
            <person name="Richard G.-F."/>
            <person name="Straub M.-L."/>
            <person name="Suleau A."/>
            <person name="Swennen D."/>
            <person name="Tekaia F."/>
            <person name="Wesolowski-Louvel M."/>
            <person name="Westhof E."/>
            <person name="Wirth B."/>
            <person name="Zeniou-Meyer M."/>
            <person name="Zivanovic Y."/>
            <person name="Bolotin-Fukuhara M."/>
            <person name="Thierry A."/>
            <person name="Bouchier C."/>
            <person name="Caudron B."/>
            <person name="Scarpelli C."/>
            <person name="Gaillardin C."/>
            <person name="Weissenbach J."/>
            <person name="Wincker P."/>
            <person name="Souciet J.-L."/>
        </authorList>
    </citation>
    <scope>NUCLEOTIDE SEQUENCE [LARGE SCALE GENOMIC DNA]</scope>
    <source>
        <strain>ATCC 2001 / BCRC 20586 / JCM 3761 / NBRC 0622 / NRRL Y-65 / CBS 138</strain>
    </source>
</reference>
<organism>
    <name type="scientific">Candida glabrata (strain ATCC 2001 / BCRC 20586 / JCM 3761 / NBRC 0622 / NRRL Y-65 / CBS 138)</name>
    <name type="common">Yeast</name>
    <name type="synonym">Nakaseomyces glabratus</name>
    <dbReference type="NCBI Taxonomy" id="284593"/>
    <lineage>
        <taxon>Eukaryota</taxon>
        <taxon>Fungi</taxon>
        <taxon>Dikarya</taxon>
        <taxon>Ascomycota</taxon>
        <taxon>Saccharomycotina</taxon>
        <taxon>Saccharomycetes</taxon>
        <taxon>Saccharomycetales</taxon>
        <taxon>Saccharomycetaceae</taxon>
        <taxon>Nakaseomyces</taxon>
    </lineage>
</organism>
<protein>
    <recommendedName>
        <fullName evidence="1">Dol-P-Glc:Glc(2)Man(9)GlcNAc(2)-PP-Dol alpha-1,2-glucosyltransferase</fullName>
        <ecNumber evidence="1">2.4.1.256</ecNumber>
    </recommendedName>
    <alternativeName>
        <fullName>Alpha-1,2-glucosyltransferase ALG10-A</fullName>
    </alternativeName>
    <alternativeName>
        <fullName>Alpha-2-glucosyltransferase ALG10</fullName>
    </alternativeName>
    <alternativeName>
        <fullName>Asparagine-linked glycosylation protein 10</fullName>
    </alternativeName>
    <alternativeName>
        <fullName>Dolichyl-phosphoglucose-dependent glucosyltransferase ALG10</fullName>
    </alternativeName>
</protein>
<comment type="function">
    <text evidence="1">Dol-P-Glc:Glc(2)Man(9)GlcNAc(2)-PP-Dol alpha-1,2-glucosyltransferase that operates in the biosynthetic pathway of dolichol-linked oligosaccharides, the glycan precursors employed in protein asparagine (N)-glycosylation. The assembly of dolichol-linked oligosaccharides begins on the cytosolic side of the endoplasmic reticulum membrane and finishes in its lumen. The sequential addition of sugars to dolichol pyrophosphate produces dolichol-linked oligosaccharides containing fourteen sugars, including two GlcNAcs, nine mannoses and three glucoses. Once assembled, the oligosaccharide is transferred from the lipid to nascent proteins by oligosaccharyltransferases. In the lumen of the endoplasmic reticulum, adds the third and last glucose residue from dolichyl phosphate glucose (Dol-P-Glc) onto the lipid-linked oligosaccharide intermediate Glc(2)Man(9)GlcNAc(2)-PP-Dol to produce Glc(3)Man(9)GlcNAc(2)-PP-Dol.</text>
</comment>
<comment type="catalytic activity">
    <reaction evidence="1">
        <text>an alpha-D-Glc-(1-&gt;3)-alpha-D-Glc-(1-&gt;3)-alpha-D-Man-(1-&gt;2)-alpha-D-Man-(1-&gt;2)-alpha-D-Man-(1-&gt;3)-[alpha-D-Man-(1-&gt;2)-alpha-D-Man-(1-&gt;3)-[alpha-D-Man-(1-&gt;2)-alpha-D-Man-(1-&gt;6)]-alpha-D-Man-(1-&gt;6)]-beta-D-Man-(1-&gt;4)-beta-D-GlcNAc-(1-&gt;4)-alpha-D-GlcNAc-diphospho-di-trans,poly-cis-dolichol + a di-trans,poly-cis-dolichyl beta-D-glucosyl phosphate = a alpha-D-Glc-(1-&gt;2)-alpha-D-Glc-(1-&gt;3)-alpha-D-Glc-(1-&gt;3)-alpha-D-Man-(1-&gt;2)-alpha-D-Man-(1-&gt;2)-alpha-D-Man-(1-&gt;3)-[alpha-D-Man-(1-&gt;2)-alpha-D-Man-(1-&gt;3)-[alpha-D-Man-(1-&gt;2)-alpha-D-Man-(1-&gt;6)]-alpha-D-Man-(1-&gt;6)]-beta-D-Man-(1-&gt;4)-beta-D-GlcNAc-(1-&gt;4)-alpha-D-GlcNAc-diphospho-di-trans,poly-cis-dolichol + a di-trans,poly-cis-dolichyl phosphate + H(+)</text>
        <dbReference type="Rhea" id="RHEA:29543"/>
        <dbReference type="Rhea" id="RHEA-COMP:19498"/>
        <dbReference type="Rhea" id="RHEA-COMP:19502"/>
        <dbReference type="Rhea" id="RHEA-COMP:19512"/>
        <dbReference type="Rhea" id="RHEA-COMP:19522"/>
        <dbReference type="ChEBI" id="CHEBI:15378"/>
        <dbReference type="ChEBI" id="CHEBI:57525"/>
        <dbReference type="ChEBI" id="CHEBI:57683"/>
        <dbReference type="ChEBI" id="CHEBI:132522"/>
        <dbReference type="ChEBI" id="CHEBI:132523"/>
        <dbReference type="EC" id="2.4.1.256"/>
    </reaction>
    <physiologicalReaction direction="left-to-right" evidence="1">
        <dbReference type="Rhea" id="RHEA:29544"/>
    </physiologicalReaction>
</comment>
<comment type="pathway">
    <text evidence="1">Protein modification; protein glycosylation.</text>
</comment>
<comment type="subcellular location">
    <subcellularLocation>
        <location evidence="1">Endoplasmic reticulum membrane</location>
        <topology evidence="2">Multi-pass membrane protein</topology>
    </subcellularLocation>
</comment>
<comment type="similarity">
    <text evidence="3">Belongs to the ALG10 glucosyltransferase family.</text>
</comment>
<feature type="chain" id="PRO_0000215453" description="Dol-P-Glc:Glc(2)Man(9)GlcNAc(2)-PP-Dol alpha-1,2-glucosyltransferase">
    <location>
        <begin position="1"/>
        <end position="522"/>
    </location>
</feature>
<feature type="transmembrane region" description="Helical" evidence="2">
    <location>
        <begin position="36"/>
        <end position="56"/>
    </location>
</feature>
<feature type="transmembrane region" description="Helical" evidence="2">
    <location>
        <begin position="119"/>
        <end position="139"/>
    </location>
</feature>
<feature type="transmembrane region" description="Helical" evidence="2">
    <location>
        <begin position="142"/>
        <end position="162"/>
    </location>
</feature>
<feature type="transmembrane region" description="Helical" evidence="2">
    <location>
        <begin position="172"/>
        <end position="192"/>
    </location>
</feature>
<feature type="transmembrane region" description="Helical" evidence="2">
    <location>
        <begin position="205"/>
        <end position="225"/>
    </location>
</feature>
<feature type="transmembrane region" description="Helical" evidence="2">
    <location>
        <begin position="254"/>
        <end position="274"/>
    </location>
</feature>
<feature type="transmembrane region" description="Helical" evidence="2">
    <location>
        <begin position="292"/>
        <end position="312"/>
    </location>
</feature>
<feature type="transmembrane region" description="Helical" evidence="2">
    <location>
        <begin position="330"/>
        <end position="350"/>
    </location>
</feature>
<feature type="transmembrane region" description="Helical" evidence="2">
    <location>
        <begin position="373"/>
        <end position="393"/>
    </location>
</feature>
<feature type="transmembrane region" description="Helical" evidence="2">
    <location>
        <begin position="421"/>
        <end position="441"/>
    </location>
</feature>
<feature type="transmembrane region" description="Helical" evidence="2">
    <location>
        <begin position="446"/>
        <end position="466"/>
    </location>
</feature>
<feature type="transmembrane region" description="Helical" evidence="2">
    <location>
        <begin position="485"/>
        <end position="505"/>
    </location>
</feature>
<feature type="glycosylation site" description="N-linked (GlcNAc...) asparagine" evidence="2">
    <location>
        <position position="275"/>
    </location>
</feature>